<keyword id="KW-0045">Antibiotic biosynthesis</keyword>
<keyword id="KW-0963">Cytoplasm</keyword>
<keyword id="KW-0378">Hydrolase</keyword>
<keyword id="KW-0479">Metal-binding</keyword>
<keyword id="KW-1185">Reference proteome</keyword>
<keyword id="KW-0862">Zinc</keyword>
<dbReference type="EC" id="3.-.-.-"/>
<dbReference type="EMBL" id="AL009126">
    <property type="protein sequence ID" value="CAB13581.1"/>
    <property type="molecule type" value="Genomic_DNA"/>
</dbReference>
<dbReference type="PIR" id="H69677">
    <property type="entry name" value="H69677"/>
</dbReference>
<dbReference type="RefSeq" id="NP_389590.1">
    <property type="nucleotide sequence ID" value="NC_000964.3"/>
</dbReference>
<dbReference type="RefSeq" id="WP_003231824.1">
    <property type="nucleotide sequence ID" value="NZ_OZ025638.1"/>
</dbReference>
<dbReference type="SMR" id="O34769"/>
<dbReference type="FunCoup" id="O34769">
    <property type="interactions" value="468"/>
</dbReference>
<dbReference type="STRING" id="224308.BSU17090"/>
<dbReference type="PaxDb" id="224308-BSU17090"/>
<dbReference type="EnsemblBacteria" id="CAB13581">
    <property type="protein sequence ID" value="CAB13581"/>
    <property type="gene ID" value="BSU_17090"/>
</dbReference>
<dbReference type="GeneID" id="939445"/>
<dbReference type="KEGG" id="bsu:BSU17090"/>
<dbReference type="PATRIC" id="fig|224308.179.peg.1851"/>
<dbReference type="eggNOG" id="COG0491">
    <property type="taxonomic scope" value="Bacteria"/>
</dbReference>
<dbReference type="InParanoid" id="O34769"/>
<dbReference type="OrthoDB" id="9802248at2"/>
<dbReference type="PhylomeDB" id="O34769"/>
<dbReference type="BioCyc" id="BSUB:BSU17090-MONOMER"/>
<dbReference type="UniPathway" id="UPA01003"/>
<dbReference type="Proteomes" id="UP000001570">
    <property type="component" value="Chromosome"/>
</dbReference>
<dbReference type="GO" id="GO:0005737">
    <property type="term" value="C:cytoplasm"/>
    <property type="evidence" value="ECO:0007669"/>
    <property type="project" value="UniProtKB-SubCell"/>
</dbReference>
<dbReference type="GO" id="GO:0016787">
    <property type="term" value="F:hydrolase activity"/>
    <property type="evidence" value="ECO:0007669"/>
    <property type="project" value="UniProtKB-KW"/>
</dbReference>
<dbReference type="GO" id="GO:0046872">
    <property type="term" value="F:metal ion binding"/>
    <property type="evidence" value="ECO:0007669"/>
    <property type="project" value="UniProtKB-KW"/>
</dbReference>
<dbReference type="GO" id="GO:0017000">
    <property type="term" value="P:antibiotic biosynthetic process"/>
    <property type="evidence" value="ECO:0007669"/>
    <property type="project" value="UniProtKB-KW"/>
</dbReference>
<dbReference type="CDD" id="cd16275">
    <property type="entry name" value="BaeB-like_MBL-fold"/>
    <property type="match status" value="1"/>
</dbReference>
<dbReference type="Gene3D" id="3.60.15.10">
    <property type="entry name" value="Ribonuclease Z/Hydroxyacylglutathione hydrolase-like"/>
    <property type="match status" value="1"/>
</dbReference>
<dbReference type="InterPro" id="IPR051453">
    <property type="entry name" value="MBL_Glyoxalase_II"/>
</dbReference>
<dbReference type="InterPro" id="IPR001279">
    <property type="entry name" value="Metallo-B-lactamas"/>
</dbReference>
<dbReference type="InterPro" id="IPR036866">
    <property type="entry name" value="RibonucZ/Hydroxyglut_hydro"/>
</dbReference>
<dbReference type="PANTHER" id="PTHR46233">
    <property type="entry name" value="HYDROXYACYLGLUTATHIONE HYDROLASE GLOC"/>
    <property type="match status" value="1"/>
</dbReference>
<dbReference type="PANTHER" id="PTHR46233:SF3">
    <property type="entry name" value="HYDROXYACYLGLUTATHIONE HYDROLASE GLOC"/>
    <property type="match status" value="1"/>
</dbReference>
<dbReference type="Pfam" id="PF00753">
    <property type="entry name" value="Lactamase_B"/>
    <property type="match status" value="1"/>
</dbReference>
<dbReference type="SMART" id="SM00849">
    <property type="entry name" value="Lactamase_B"/>
    <property type="match status" value="1"/>
</dbReference>
<dbReference type="SUPFAM" id="SSF56281">
    <property type="entry name" value="Metallo-hydrolase/oxidoreductase"/>
    <property type="match status" value="1"/>
</dbReference>
<gene>
    <name type="primary">pksB</name>
    <name type="ordered locus">BSU17090</name>
</gene>
<protein>
    <recommendedName>
        <fullName>Probable polyketide biosynthesis zinc-dependent hydrolase PksB</fullName>
        <ecNumber>3.-.-.-</ecNumber>
    </recommendedName>
</protein>
<name>PKSB_BACSU</name>
<feature type="chain" id="PRO_0000388006" description="Probable polyketide biosynthesis zinc-dependent hydrolase PksB">
    <location>
        <begin position="1"/>
        <end position="225"/>
    </location>
</feature>
<feature type="binding site" evidence="1">
    <location>
        <position position="62"/>
    </location>
    <ligand>
        <name>Zn(2+)</name>
        <dbReference type="ChEBI" id="CHEBI:29105"/>
        <label>1</label>
    </ligand>
</feature>
<feature type="binding site" evidence="1">
    <location>
        <position position="64"/>
    </location>
    <ligand>
        <name>Zn(2+)</name>
        <dbReference type="ChEBI" id="CHEBI:29105"/>
        <label>1</label>
    </ligand>
</feature>
<feature type="binding site" evidence="1">
    <location>
        <position position="66"/>
    </location>
    <ligand>
        <name>Zn(2+)</name>
        <dbReference type="ChEBI" id="CHEBI:29105"/>
        <label>2</label>
    </ligand>
</feature>
<feature type="binding site" evidence="1">
    <location>
        <position position="67"/>
    </location>
    <ligand>
        <name>Zn(2+)</name>
        <dbReference type="ChEBI" id="CHEBI:29105"/>
        <label>2</label>
    </ligand>
</feature>
<feature type="binding site" evidence="1">
    <location>
        <position position="123"/>
    </location>
    <ligand>
        <name>Zn(2+)</name>
        <dbReference type="ChEBI" id="CHEBI:29105"/>
        <label>1</label>
    </ligand>
</feature>
<feature type="binding site" evidence="1">
    <location>
        <position position="140"/>
    </location>
    <ligand>
        <name>Zn(2+)</name>
        <dbReference type="ChEBI" id="CHEBI:29105"/>
        <label>1</label>
    </ligand>
</feature>
<feature type="binding site" evidence="1">
    <location>
        <position position="140"/>
    </location>
    <ligand>
        <name>Zn(2+)</name>
        <dbReference type="ChEBI" id="CHEBI:29105"/>
        <label>2</label>
    </ligand>
</feature>
<feature type="binding site" evidence="1">
    <location>
        <position position="181"/>
    </location>
    <ligand>
        <name>Zn(2+)</name>
        <dbReference type="ChEBI" id="CHEBI:29105"/>
        <label>2</label>
    </ligand>
</feature>
<sequence>MNLTYKVHPIKTRYQGWTNYCYIIEDIVSRSAIVVDPSWELSKITTTLSELEAELKAVALTHSHYDHVNLVDPLTKMFNAQVYMSKKEIDYYQFRCRNLISLDDHQTISIGNTRAQCLLTPGHTAGGMCYLFSESIFTGDTVFTEGCGICEDDGSSAEEMFDSIQRIKSEVSPHVRVYPGHSFGKSPGHSIKDLYQHNIYFQIDKKEYFVKFRTRKNQKGIFDFK</sequence>
<evidence type="ECO:0000250" key="1"/>
<evidence type="ECO:0000269" key="2">
    <source>
    </source>
</evidence>
<evidence type="ECO:0000269" key="3">
    <source>
    </source>
</evidence>
<evidence type="ECO:0000305" key="4"/>
<reference key="1">
    <citation type="journal article" date="1997" name="Nature">
        <title>The complete genome sequence of the Gram-positive bacterium Bacillus subtilis.</title>
        <authorList>
            <person name="Kunst F."/>
            <person name="Ogasawara N."/>
            <person name="Moszer I."/>
            <person name="Albertini A.M."/>
            <person name="Alloni G."/>
            <person name="Azevedo V."/>
            <person name="Bertero M.G."/>
            <person name="Bessieres P."/>
            <person name="Bolotin A."/>
            <person name="Borchert S."/>
            <person name="Borriss R."/>
            <person name="Boursier L."/>
            <person name="Brans A."/>
            <person name="Braun M."/>
            <person name="Brignell S.C."/>
            <person name="Bron S."/>
            <person name="Brouillet S."/>
            <person name="Bruschi C.V."/>
            <person name="Caldwell B."/>
            <person name="Capuano V."/>
            <person name="Carter N.M."/>
            <person name="Choi S.-K."/>
            <person name="Codani J.-J."/>
            <person name="Connerton I.F."/>
            <person name="Cummings N.J."/>
            <person name="Daniel R.A."/>
            <person name="Denizot F."/>
            <person name="Devine K.M."/>
            <person name="Duesterhoeft A."/>
            <person name="Ehrlich S.D."/>
            <person name="Emmerson P.T."/>
            <person name="Entian K.-D."/>
            <person name="Errington J."/>
            <person name="Fabret C."/>
            <person name="Ferrari E."/>
            <person name="Foulger D."/>
            <person name="Fritz C."/>
            <person name="Fujita M."/>
            <person name="Fujita Y."/>
            <person name="Fuma S."/>
            <person name="Galizzi A."/>
            <person name="Galleron N."/>
            <person name="Ghim S.-Y."/>
            <person name="Glaser P."/>
            <person name="Goffeau A."/>
            <person name="Golightly E.J."/>
            <person name="Grandi G."/>
            <person name="Guiseppi G."/>
            <person name="Guy B.J."/>
            <person name="Haga K."/>
            <person name="Haiech J."/>
            <person name="Harwood C.R."/>
            <person name="Henaut A."/>
            <person name="Hilbert H."/>
            <person name="Holsappel S."/>
            <person name="Hosono S."/>
            <person name="Hullo M.-F."/>
            <person name="Itaya M."/>
            <person name="Jones L.-M."/>
            <person name="Joris B."/>
            <person name="Karamata D."/>
            <person name="Kasahara Y."/>
            <person name="Klaerr-Blanchard M."/>
            <person name="Klein C."/>
            <person name="Kobayashi Y."/>
            <person name="Koetter P."/>
            <person name="Koningstein G."/>
            <person name="Krogh S."/>
            <person name="Kumano M."/>
            <person name="Kurita K."/>
            <person name="Lapidus A."/>
            <person name="Lardinois S."/>
            <person name="Lauber J."/>
            <person name="Lazarevic V."/>
            <person name="Lee S.-M."/>
            <person name="Levine A."/>
            <person name="Liu H."/>
            <person name="Masuda S."/>
            <person name="Mauel C."/>
            <person name="Medigue C."/>
            <person name="Medina N."/>
            <person name="Mellado R.P."/>
            <person name="Mizuno M."/>
            <person name="Moestl D."/>
            <person name="Nakai S."/>
            <person name="Noback M."/>
            <person name="Noone D."/>
            <person name="O'Reilly M."/>
            <person name="Ogawa K."/>
            <person name="Ogiwara A."/>
            <person name="Oudega B."/>
            <person name="Park S.-H."/>
            <person name="Parro V."/>
            <person name="Pohl T.M."/>
            <person name="Portetelle D."/>
            <person name="Porwollik S."/>
            <person name="Prescott A.M."/>
            <person name="Presecan E."/>
            <person name="Pujic P."/>
            <person name="Purnelle B."/>
            <person name="Rapoport G."/>
            <person name="Rey M."/>
            <person name="Reynolds S."/>
            <person name="Rieger M."/>
            <person name="Rivolta C."/>
            <person name="Rocha E."/>
            <person name="Roche B."/>
            <person name="Rose M."/>
            <person name="Sadaie Y."/>
            <person name="Sato T."/>
            <person name="Scanlan E."/>
            <person name="Schleich S."/>
            <person name="Schroeter R."/>
            <person name="Scoffone F."/>
            <person name="Sekiguchi J."/>
            <person name="Sekowska A."/>
            <person name="Seror S.J."/>
            <person name="Serror P."/>
            <person name="Shin B.-S."/>
            <person name="Soldo B."/>
            <person name="Sorokin A."/>
            <person name="Tacconi E."/>
            <person name="Takagi T."/>
            <person name="Takahashi H."/>
            <person name="Takemaru K."/>
            <person name="Takeuchi M."/>
            <person name="Tamakoshi A."/>
            <person name="Tanaka T."/>
            <person name="Terpstra P."/>
            <person name="Tognoni A."/>
            <person name="Tosato V."/>
            <person name="Uchiyama S."/>
            <person name="Vandenbol M."/>
            <person name="Vannier F."/>
            <person name="Vassarotti A."/>
            <person name="Viari A."/>
            <person name="Wambutt R."/>
            <person name="Wedler E."/>
            <person name="Wedler H."/>
            <person name="Weitzenegger T."/>
            <person name="Winters P."/>
            <person name="Wipat A."/>
            <person name="Yamamoto H."/>
            <person name="Yamane K."/>
            <person name="Yasumoto K."/>
            <person name="Yata K."/>
            <person name="Yoshida K."/>
            <person name="Yoshikawa H.-F."/>
            <person name="Zumstein E."/>
            <person name="Yoshikawa H."/>
            <person name="Danchin A."/>
        </authorList>
    </citation>
    <scope>NUCLEOTIDE SEQUENCE [LARGE SCALE GENOMIC DNA]</scope>
    <source>
        <strain>168</strain>
    </source>
</reference>
<reference key="2">
    <citation type="journal article" date="2007" name="Proc. Natl. Acad. Sci. U.S.A.">
        <title>A singular enzymatic megacomplex from Bacillus subtilis.</title>
        <authorList>
            <person name="Straight P.D."/>
            <person name="Fischbach M.A."/>
            <person name="Walsh C.T."/>
            <person name="Rudner D.Z."/>
            <person name="Kolter R."/>
        </authorList>
    </citation>
    <scope>SUBCELLULAR LOCATION</scope>
    <source>
        <strain>168 / Marburg / ATCC 6051 / DSM 10 / JCM 1465 / NBRC 13719 / NCIMB 3610 / NRRL NRS-744 / VKM B-501</strain>
    </source>
</reference>
<reference key="3">
    <citation type="journal article" date="2007" name="Proc. Natl. Acad. Sci. U.S.A.">
        <title>The identification of bacillaene, the product of the PksX megacomplex in Bacillus subtilis.</title>
        <authorList>
            <person name="Butcher R.A."/>
            <person name="Schroeder F.C."/>
            <person name="Fischbach M.A."/>
            <person name="Straight P.D."/>
            <person name="Kolter R."/>
            <person name="Walsh C.T."/>
            <person name="Clardy J."/>
        </authorList>
    </citation>
    <scope>FUNCTION IN BACILLAENE BIOSYNTHESIS</scope>
    <source>
        <strain>168 / Marburg / ATCC 6051 / DSM 10 / JCM 1465 / NBRC 13719 / NCIMB 3610 / NRRL NRS-744 / VKM B-501</strain>
    </source>
</reference>
<accession>O34769</accession>
<proteinExistence type="evidence at protein level"/>
<organism>
    <name type="scientific">Bacillus subtilis (strain 168)</name>
    <dbReference type="NCBI Taxonomy" id="224308"/>
    <lineage>
        <taxon>Bacteria</taxon>
        <taxon>Bacillati</taxon>
        <taxon>Bacillota</taxon>
        <taxon>Bacilli</taxon>
        <taxon>Bacillales</taxon>
        <taxon>Bacillaceae</taxon>
        <taxon>Bacillus</taxon>
    </lineage>
</organism>
<comment type="function">
    <text evidence="3">Probably involved in some intermediate steps for the synthesis of the antibiotic polyketide bacillaene which is involved in secondary metabolism.</text>
</comment>
<comment type="cofactor">
    <cofactor evidence="1">
        <name>Zn(2+)</name>
        <dbReference type="ChEBI" id="CHEBI:29105"/>
    </cofactor>
    <text evidence="1">Binds 2 Zn(2+) ions per subunit.</text>
</comment>
<comment type="pathway">
    <text>Antibiotic biosynthesis; bacillaene biosynthesis.</text>
</comment>
<comment type="subcellular location">
    <subcellularLocation>
        <location evidence="2">Cytoplasm</location>
    </subcellularLocation>
</comment>
<comment type="similarity">
    <text evidence="4">Belongs to the metallo-beta-lactamase superfamily.</text>
</comment>